<feature type="chain" id="PRO_0000406164" description="Putative glutathione-dependent formaldehyde-activating enzyme">
    <location>
        <begin position="1"/>
        <end position="190"/>
    </location>
</feature>
<feature type="domain" description="CENP-V/GFA" evidence="2">
    <location>
        <begin position="19"/>
        <end position="165"/>
    </location>
</feature>
<feature type="binding site" evidence="1 2">
    <location>
        <position position="26"/>
    </location>
    <ligand>
        <name>Zn(2+)</name>
        <dbReference type="ChEBI" id="CHEBI:29105"/>
        <label>1</label>
        <note>structural</note>
    </ligand>
</feature>
<feature type="binding site" evidence="1 2">
    <location>
        <position position="28"/>
    </location>
    <ligand>
        <name>Zn(2+)</name>
        <dbReference type="ChEBI" id="CHEBI:29105"/>
        <label>1</label>
        <note>structural</note>
    </ligand>
</feature>
<feature type="binding site" evidence="1 2">
    <location>
        <position position="47"/>
    </location>
    <ligand>
        <name>Zn(2+)</name>
        <dbReference type="ChEBI" id="CHEBI:29105"/>
        <label>2</label>
        <note>catalytic</note>
    </ligand>
</feature>
<feature type="binding site" evidence="1 2">
    <location>
        <position position="49"/>
    </location>
    <ligand>
        <name>Zn(2+)</name>
        <dbReference type="ChEBI" id="CHEBI:29105"/>
        <label>2</label>
        <note>catalytic</note>
    </ligand>
</feature>
<feature type="binding site" evidence="1 2">
    <location>
        <position position="52"/>
    </location>
    <ligand>
        <name>Zn(2+)</name>
        <dbReference type="ChEBI" id="CHEBI:29105"/>
        <label>2</label>
        <note>catalytic</note>
    </ligand>
</feature>
<feature type="binding site" evidence="1 2">
    <location>
        <position position="94"/>
    </location>
    <ligand>
        <name>Zn(2+)</name>
        <dbReference type="ChEBI" id="CHEBI:29105"/>
        <label>1</label>
        <note>structural</note>
    </ligand>
</feature>
<feature type="binding site" evidence="1 2">
    <location>
        <position position="97"/>
    </location>
    <ligand>
        <name>Zn(2+)</name>
        <dbReference type="ChEBI" id="CHEBI:29105"/>
        <label>1</label>
        <note>structural</note>
    </ligand>
</feature>
<sequence length="190" mass="20652">MPSIHPSIDNGITKGDPNFKGGKLYCHCPTRKVEVTLAGNVAHNHACGCSKCWKPEGALFSVVGVISKDAVSVTANGDKLHIVDESAAIQRNACKECGVHLFGRIIVDHPFKGLDFVHAELSPQKGWQEPQFAAFVSSIIEQGFHPSEMDAIREKFRKVGLQPYDVLSPTLMDLIATYTAQKSGKLPAKL</sequence>
<dbReference type="EC" id="4.4.1.22" evidence="1"/>
<dbReference type="EMBL" id="GL537081">
    <property type="protein sequence ID" value="EFQ87295.1"/>
    <property type="molecule type" value="Genomic_DNA"/>
</dbReference>
<dbReference type="RefSeq" id="XP_003304610.1">
    <property type="nucleotide sequence ID" value="XM_003304562.1"/>
</dbReference>
<dbReference type="SMR" id="E3S405"/>
<dbReference type="STRING" id="861557.E3S405"/>
<dbReference type="EnsemblFungi" id="EFQ87295">
    <property type="protein sequence ID" value="EFQ87295"/>
    <property type="gene ID" value="PTT_17259"/>
</dbReference>
<dbReference type="KEGG" id="pte:PTT_17259"/>
<dbReference type="eggNOG" id="ENOG502SKH9">
    <property type="taxonomic scope" value="Eukaryota"/>
</dbReference>
<dbReference type="HOGENOM" id="CLU_090716_0_0_1"/>
<dbReference type="OrthoDB" id="3446116at2759"/>
<dbReference type="UniPathway" id="UPA00562">
    <property type="reaction ID" value="UER00621"/>
</dbReference>
<dbReference type="Proteomes" id="UP000001067">
    <property type="component" value="Unassembled WGS sequence"/>
</dbReference>
<dbReference type="GO" id="GO:0051907">
    <property type="term" value="F:S-(hydroxymethyl)glutathione synthase activity"/>
    <property type="evidence" value="ECO:0007669"/>
    <property type="project" value="UniProtKB-UniRule"/>
</dbReference>
<dbReference type="GO" id="GO:0008270">
    <property type="term" value="F:zinc ion binding"/>
    <property type="evidence" value="ECO:0007669"/>
    <property type="project" value="UniProtKB-UniRule"/>
</dbReference>
<dbReference type="GO" id="GO:0046294">
    <property type="term" value="P:formaldehyde catabolic process"/>
    <property type="evidence" value="ECO:0007669"/>
    <property type="project" value="UniProtKB-UniRule"/>
</dbReference>
<dbReference type="Gene3D" id="3.90.1590.10">
    <property type="entry name" value="glutathione-dependent formaldehyde- activating enzyme (gfa)"/>
    <property type="match status" value="1"/>
</dbReference>
<dbReference type="HAMAP" id="MF_00723">
    <property type="entry name" value="Formald_GSH"/>
    <property type="match status" value="1"/>
</dbReference>
<dbReference type="InterPro" id="IPR006913">
    <property type="entry name" value="CENP-V/GFA"/>
</dbReference>
<dbReference type="InterPro" id="IPR014185">
    <property type="entry name" value="Formald_GSH"/>
</dbReference>
<dbReference type="InterPro" id="IPR011057">
    <property type="entry name" value="Mss4-like_sf"/>
</dbReference>
<dbReference type="NCBIfam" id="TIGR02820">
    <property type="entry name" value="formald_GSH"/>
    <property type="match status" value="1"/>
</dbReference>
<dbReference type="NCBIfam" id="NF003829">
    <property type="entry name" value="PRK05417.1"/>
    <property type="match status" value="1"/>
</dbReference>
<dbReference type="PANTHER" id="PTHR33337:SF40">
    <property type="entry name" value="CENP-V_GFA DOMAIN-CONTAINING PROTEIN-RELATED"/>
    <property type="match status" value="1"/>
</dbReference>
<dbReference type="PANTHER" id="PTHR33337">
    <property type="entry name" value="GFA DOMAIN-CONTAINING PROTEIN"/>
    <property type="match status" value="1"/>
</dbReference>
<dbReference type="Pfam" id="PF04828">
    <property type="entry name" value="GFA"/>
    <property type="match status" value="1"/>
</dbReference>
<dbReference type="PIRSF" id="PIRSF033318">
    <property type="entry name" value="Formald_GSH"/>
    <property type="match status" value="1"/>
</dbReference>
<dbReference type="SUPFAM" id="SSF51316">
    <property type="entry name" value="Mss4-like"/>
    <property type="match status" value="1"/>
</dbReference>
<dbReference type="PROSITE" id="PS51891">
    <property type="entry name" value="CENP_V_GFA"/>
    <property type="match status" value="1"/>
</dbReference>
<proteinExistence type="inferred from homology"/>
<protein>
    <recommendedName>
        <fullName evidence="1">Putative glutathione-dependent formaldehyde-activating enzyme</fullName>
        <ecNumber evidence="1">4.4.1.22</ecNumber>
    </recommendedName>
    <alternativeName>
        <fullName evidence="1">S-(hydroxymethyl)glutathione synthase</fullName>
    </alternativeName>
</protein>
<gene>
    <name type="ORF">PTT_17259</name>
</gene>
<organism>
    <name type="scientific">Pyrenophora teres f. teres (strain 0-1)</name>
    <name type="common">Barley net blotch fungus</name>
    <name type="synonym">Drechslera teres f. teres</name>
    <dbReference type="NCBI Taxonomy" id="861557"/>
    <lineage>
        <taxon>Eukaryota</taxon>
        <taxon>Fungi</taxon>
        <taxon>Dikarya</taxon>
        <taxon>Ascomycota</taxon>
        <taxon>Pezizomycotina</taxon>
        <taxon>Dothideomycetes</taxon>
        <taxon>Pleosporomycetidae</taxon>
        <taxon>Pleosporales</taxon>
        <taxon>Pleosporineae</taxon>
        <taxon>Pleosporaceae</taxon>
        <taxon>Pyrenophora</taxon>
    </lineage>
</organism>
<name>GFA_PYRTT</name>
<evidence type="ECO:0000255" key="1">
    <source>
        <dbReference type="HAMAP-Rule" id="MF_03142"/>
    </source>
</evidence>
<evidence type="ECO:0000255" key="2">
    <source>
        <dbReference type="PROSITE-ProRule" id="PRU01239"/>
    </source>
</evidence>
<evidence type="ECO:0000305" key="3"/>
<accession>E3S405</accession>
<reference key="1">
    <citation type="journal article" date="2010" name="Genome Biol.">
        <title>A first genome assembly of the barley fungal pathogen Pyrenophora teres f. teres.</title>
        <authorList>
            <person name="Ellwood S.R."/>
            <person name="Liu Z."/>
            <person name="Syme R.A."/>
            <person name="Lai Z."/>
            <person name="Hane J.K."/>
            <person name="Keiper F."/>
            <person name="Moffat C.S."/>
            <person name="Oliver R.P."/>
            <person name="Friesen T.L."/>
        </authorList>
    </citation>
    <scope>NUCLEOTIDE SEQUENCE [LARGE SCALE GENOMIC DNA]</scope>
    <source>
        <strain>0-1</strain>
    </source>
</reference>
<keyword id="KW-0456">Lyase</keyword>
<keyword id="KW-0479">Metal-binding</keyword>
<keyword id="KW-1185">Reference proteome</keyword>
<keyword id="KW-0862">Zinc</keyword>
<comment type="function">
    <text evidence="1">Catalyzes the condensation of formaldehyde and glutathione to S-hydroxymethylglutathione.</text>
</comment>
<comment type="catalytic activity">
    <reaction evidence="1">
        <text>S-(hydroxymethyl)glutathione = glutathione + formaldehyde</text>
        <dbReference type="Rhea" id="RHEA:22488"/>
        <dbReference type="ChEBI" id="CHEBI:16842"/>
        <dbReference type="ChEBI" id="CHEBI:57925"/>
        <dbReference type="ChEBI" id="CHEBI:58758"/>
        <dbReference type="EC" id="4.4.1.22"/>
    </reaction>
</comment>
<comment type="cofactor">
    <cofactor evidence="1 2">
        <name>Zn(2+)</name>
        <dbReference type="ChEBI" id="CHEBI:29105"/>
    </cofactor>
    <text evidence="1 2">Binds 2 Zn(2+) ions per subunit.</text>
</comment>
<comment type="pathway">
    <text evidence="1">One-carbon metabolism; formaldehyde degradation; formate from formaldehyde (glutathione route): step 1/3.</text>
</comment>
<comment type="similarity">
    <text evidence="3">Belongs to the Gfa family.</text>
</comment>